<sequence>MRRGAPQDQELVGPGPPGRGSRGAPPPLGPVVPVLVFPPDLVFRADQRSGPRQLLTLYNPTGTALRFRVLCTAPAKYTVFDAEGYVKPQSCIDIVIRHVAPIPSHYDVQDRFRIELSEEGAEGRVVGRKDITSILRAPAYPLELQGQPDPAPRPGPPAGTPPPTARHFQEHPRQQLATSSFLLFLLTGIVSVAFLLLPLPDELGSQLPQVLHVSLGQKLVAAYVLGLLTMVFLRT</sequence>
<accession>O75425</accession>
<accession>A4D2D1</accession>
<accession>A6NG17</accession>
<accession>C9JE89</accession>
<accession>D6W5W1</accession>
<accession>O75423</accession>
<accession>O75424</accession>
<name>MSPD3_HUMAN</name>
<reference key="1">
    <citation type="journal article" date="1998" name="Genome Res.">
        <title>Large-scale sequencing of two regions in human chromosome 7q22: analysis of 650 kb of genomic sequence around the EPO and CUTL1 loci reveals 17 genes.</title>
        <authorList>
            <person name="Gloeckner G."/>
            <person name="Scherer S."/>
            <person name="Schattevoy R."/>
            <person name="Boright A.P."/>
            <person name="Weber J."/>
            <person name="Tsui L.-C."/>
            <person name="Rosenthal A."/>
        </authorList>
    </citation>
    <scope>NUCLEOTIDE SEQUENCE [GENOMIC DNA] (ISOFORMS 1; 2 AND 3)</scope>
</reference>
<reference key="2">
    <citation type="journal article" date="2003" name="Nature">
        <title>The DNA sequence of human chromosome 7.</title>
        <authorList>
            <person name="Hillier L.W."/>
            <person name="Fulton R.S."/>
            <person name="Fulton L.A."/>
            <person name="Graves T.A."/>
            <person name="Pepin K.H."/>
            <person name="Wagner-McPherson C."/>
            <person name="Layman D."/>
            <person name="Maas J."/>
            <person name="Jaeger S."/>
            <person name="Walker R."/>
            <person name="Wylie K."/>
            <person name="Sekhon M."/>
            <person name="Becker M.C."/>
            <person name="O'Laughlin M.D."/>
            <person name="Schaller M.E."/>
            <person name="Fewell G.A."/>
            <person name="Delehaunty K.D."/>
            <person name="Miner T.L."/>
            <person name="Nash W.E."/>
            <person name="Cordes M."/>
            <person name="Du H."/>
            <person name="Sun H."/>
            <person name="Edwards J."/>
            <person name="Bradshaw-Cordum H."/>
            <person name="Ali J."/>
            <person name="Andrews S."/>
            <person name="Isak A."/>
            <person name="Vanbrunt A."/>
            <person name="Nguyen C."/>
            <person name="Du F."/>
            <person name="Lamar B."/>
            <person name="Courtney L."/>
            <person name="Kalicki J."/>
            <person name="Ozersky P."/>
            <person name="Bielicki L."/>
            <person name="Scott K."/>
            <person name="Holmes A."/>
            <person name="Harkins R."/>
            <person name="Harris A."/>
            <person name="Strong C.M."/>
            <person name="Hou S."/>
            <person name="Tomlinson C."/>
            <person name="Dauphin-Kohlberg S."/>
            <person name="Kozlowicz-Reilly A."/>
            <person name="Leonard S."/>
            <person name="Rohlfing T."/>
            <person name="Rock S.M."/>
            <person name="Tin-Wollam A.-M."/>
            <person name="Abbott A."/>
            <person name="Minx P."/>
            <person name="Maupin R."/>
            <person name="Strowmatt C."/>
            <person name="Latreille P."/>
            <person name="Miller N."/>
            <person name="Johnson D."/>
            <person name="Murray J."/>
            <person name="Woessner J.P."/>
            <person name="Wendl M.C."/>
            <person name="Yang S.-P."/>
            <person name="Schultz B.R."/>
            <person name="Wallis J.W."/>
            <person name="Spieth J."/>
            <person name="Bieri T.A."/>
            <person name="Nelson J.O."/>
            <person name="Berkowicz N."/>
            <person name="Wohldmann P.E."/>
            <person name="Cook L.L."/>
            <person name="Hickenbotham M.T."/>
            <person name="Eldred J."/>
            <person name="Williams D."/>
            <person name="Bedell J.A."/>
            <person name="Mardis E.R."/>
            <person name="Clifton S.W."/>
            <person name="Chissoe S.L."/>
            <person name="Marra M.A."/>
            <person name="Raymond C."/>
            <person name="Haugen E."/>
            <person name="Gillett W."/>
            <person name="Zhou Y."/>
            <person name="James R."/>
            <person name="Phelps K."/>
            <person name="Iadanoto S."/>
            <person name="Bubb K."/>
            <person name="Simms E."/>
            <person name="Levy R."/>
            <person name="Clendenning J."/>
            <person name="Kaul R."/>
            <person name="Kent W.J."/>
            <person name="Furey T.S."/>
            <person name="Baertsch R.A."/>
            <person name="Brent M.R."/>
            <person name="Keibler E."/>
            <person name="Flicek P."/>
            <person name="Bork P."/>
            <person name="Suyama M."/>
            <person name="Bailey J.A."/>
            <person name="Portnoy M.E."/>
            <person name="Torrents D."/>
            <person name="Chinwalla A.T."/>
            <person name="Gish W.R."/>
            <person name="Eddy S.R."/>
            <person name="McPherson J.D."/>
            <person name="Olson M.V."/>
            <person name="Eichler E.E."/>
            <person name="Green E.D."/>
            <person name="Waterston R.H."/>
            <person name="Wilson R.K."/>
        </authorList>
    </citation>
    <scope>NUCLEOTIDE SEQUENCE [LARGE SCALE GENOMIC DNA]</scope>
</reference>
<reference key="3">
    <citation type="submission" date="2005-09" db="EMBL/GenBank/DDBJ databases">
        <authorList>
            <person name="Mural R.J."/>
            <person name="Istrail S."/>
            <person name="Sutton G.G."/>
            <person name="Florea L."/>
            <person name="Halpern A.L."/>
            <person name="Mobarry C.M."/>
            <person name="Lippert R."/>
            <person name="Walenz B."/>
            <person name="Shatkay H."/>
            <person name="Dew I."/>
            <person name="Miller J.R."/>
            <person name="Flanigan M.J."/>
            <person name="Edwards N.J."/>
            <person name="Bolanos R."/>
            <person name="Fasulo D."/>
            <person name="Halldorsson B.V."/>
            <person name="Hannenhalli S."/>
            <person name="Turner R."/>
            <person name="Yooseph S."/>
            <person name="Lu F."/>
            <person name="Nusskern D.R."/>
            <person name="Shue B.C."/>
            <person name="Zheng X.H."/>
            <person name="Zhong F."/>
            <person name="Delcher A.L."/>
            <person name="Huson D.H."/>
            <person name="Kravitz S.A."/>
            <person name="Mouchard L."/>
            <person name="Reinert K."/>
            <person name="Remington K.A."/>
            <person name="Clark A.G."/>
            <person name="Waterman M.S."/>
            <person name="Eichler E.E."/>
            <person name="Adams M.D."/>
            <person name="Hunkapiller M.W."/>
            <person name="Myers E.W."/>
            <person name="Venter J.C."/>
        </authorList>
    </citation>
    <scope>NUCLEOTIDE SEQUENCE [LARGE SCALE GENOMIC DNA]</scope>
</reference>
<reference key="4">
    <citation type="journal article" date="2003" name="Science">
        <title>Human chromosome 7: DNA sequence and biology.</title>
        <authorList>
            <person name="Scherer S.W."/>
            <person name="Cheung J."/>
            <person name="MacDonald J.R."/>
            <person name="Osborne L.R."/>
            <person name="Nakabayashi K."/>
            <person name="Herbrick J.-A."/>
            <person name="Carson A.R."/>
            <person name="Parker-Katiraee L."/>
            <person name="Skaug J."/>
            <person name="Khaja R."/>
            <person name="Zhang J."/>
            <person name="Hudek A.K."/>
            <person name="Li M."/>
            <person name="Haddad M."/>
            <person name="Duggan G.E."/>
            <person name="Fernandez B.A."/>
            <person name="Kanematsu E."/>
            <person name="Gentles S."/>
            <person name="Christopoulos C.C."/>
            <person name="Choufani S."/>
            <person name="Kwasnicka D."/>
            <person name="Zheng X.H."/>
            <person name="Lai Z."/>
            <person name="Nusskern D.R."/>
            <person name="Zhang Q."/>
            <person name="Gu Z."/>
            <person name="Lu F."/>
            <person name="Zeesman S."/>
            <person name="Nowaczyk M.J."/>
            <person name="Teshima I."/>
            <person name="Chitayat D."/>
            <person name="Shuman C."/>
            <person name="Weksberg R."/>
            <person name="Zackai E.H."/>
            <person name="Grebe T.A."/>
            <person name="Cox S.R."/>
            <person name="Kirkpatrick S.J."/>
            <person name="Rahman N."/>
            <person name="Friedman J.M."/>
            <person name="Heng H.H.Q."/>
            <person name="Pelicci P.G."/>
            <person name="Lo-Coco F."/>
            <person name="Belloni E."/>
            <person name="Shaffer L.G."/>
            <person name="Pober B."/>
            <person name="Morton C.C."/>
            <person name="Gusella J.F."/>
            <person name="Bruns G.A.P."/>
            <person name="Korf B.R."/>
            <person name="Quade B.J."/>
            <person name="Ligon A.H."/>
            <person name="Ferguson H."/>
            <person name="Higgins A.W."/>
            <person name="Leach N.T."/>
            <person name="Herrick S.R."/>
            <person name="Lemyre E."/>
            <person name="Farra C.G."/>
            <person name="Kim H.-G."/>
            <person name="Summers A.M."/>
            <person name="Gripp K.W."/>
            <person name="Roberts W."/>
            <person name="Szatmari P."/>
            <person name="Winsor E.J.T."/>
            <person name="Grzeschik K.-H."/>
            <person name="Teebi A."/>
            <person name="Minassian B.A."/>
            <person name="Kere J."/>
            <person name="Armengol L."/>
            <person name="Pujana M.A."/>
            <person name="Estivill X."/>
            <person name="Wilson M.D."/>
            <person name="Koop B.F."/>
            <person name="Tosi S."/>
            <person name="Moore G.E."/>
            <person name="Boright A.P."/>
            <person name="Zlotorynski E."/>
            <person name="Kerem B."/>
            <person name="Kroisel P.M."/>
            <person name="Petek E."/>
            <person name="Oscier D.G."/>
            <person name="Mould S.J."/>
            <person name="Doehner H."/>
            <person name="Doehner K."/>
            <person name="Rommens J.M."/>
            <person name="Vincent J.B."/>
            <person name="Venter J.C."/>
            <person name="Li P.W."/>
            <person name="Mural R.J."/>
            <person name="Adams M.D."/>
            <person name="Tsui L.-C."/>
        </authorList>
    </citation>
    <scope>NUCLEOTIDE SEQUENCE [LARGE SCALE GENOMIC DNA]</scope>
</reference>
<reference key="5">
    <citation type="submission" date="2005-07" db="EMBL/GenBank/DDBJ databases">
        <authorList>
            <person name="Mural R.J."/>
            <person name="Istrail S."/>
            <person name="Sutton G.G."/>
            <person name="Florea L."/>
            <person name="Halpern A.L."/>
            <person name="Mobarry C.M."/>
            <person name="Lippert R."/>
            <person name="Walenz B."/>
            <person name="Shatkay H."/>
            <person name="Dew I."/>
            <person name="Miller J.R."/>
            <person name="Flanigan M.J."/>
            <person name="Edwards N.J."/>
            <person name="Bolanos R."/>
            <person name="Fasulo D."/>
            <person name="Halldorsson B.V."/>
            <person name="Hannenhalli S."/>
            <person name="Turner R."/>
            <person name="Yooseph S."/>
            <person name="Lu F."/>
            <person name="Nusskern D.R."/>
            <person name="Shue B.C."/>
            <person name="Zheng X.H."/>
            <person name="Zhong F."/>
            <person name="Delcher A.L."/>
            <person name="Huson D.H."/>
            <person name="Kravitz S.A."/>
            <person name="Mouchard L."/>
            <person name="Reinert K."/>
            <person name="Remington K.A."/>
            <person name="Clark A.G."/>
            <person name="Waterman M.S."/>
            <person name="Eichler E.E."/>
            <person name="Adams M.D."/>
            <person name="Hunkapiller M.W."/>
            <person name="Myers E.W."/>
            <person name="Venter J.C."/>
        </authorList>
    </citation>
    <scope>NUCLEOTIDE SEQUENCE [LARGE SCALE GENOMIC DNA]</scope>
</reference>
<reference key="6">
    <citation type="journal article" date="2004" name="Genome Res.">
        <title>The status, quality, and expansion of the NIH full-length cDNA project: the Mammalian Gene Collection (MGC).</title>
        <authorList>
            <consortium name="The MGC Project Team"/>
        </authorList>
    </citation>
    <scope>NUCLEOTIDE SEQUENCE [LARGE SCALE MRNA] (ISOFORMS 1 AND 4)</scope>
    <source>
        <tissue>B-cell</tissue>
        <tissue>Eye</tissue>
        <tissue>Pancreas</tissue>
    </source>
</reference>
<dbReference type="EMBL" id="AF053356">
    <property type="protein sequence ID" value="AAC78797.1"/>
    <property type="molecule type" value="Genomic_DNA"/>
</dbReference>
<dbReference type="EMBL" id="AF053356">
    <property type="protein sequence ID" value="AAC78798.1"/>
    <property type="molecule type" value="Genomic_DNA"/>
</dbReference>
<dbReference type="EMBL" id="AF053356">
    <property type="protein sequence ID" value="AAC78799.1"/>
    <property type="molecule type" value="Genomic_DNA"/>
</dbReference>
<dbReference type="EMBL" id="AC099394">
    <property type="status" value="NOT_ANNOTATED_CDS"/>
    <property type="molecule type" value="Genomic_DNA"/>
</dbReference>
<dbReference type="EMBL" id="CH236956">
    <property type="protein sequence ID" value="EAL23824.1"/>
    <property type="molecule type" value="Genomic_DNA"/>
</dbReference>
<dbReference type="EMBL" id="CH471091">
    <property type="protein sequence ID" value="EAW76511.1"/>
    <property type="molecule type" value="Genomic_DNA"/>
</dbReference>
<dbReference type="EMBL" id="CH471091">
    <property type="protein sequence ID" value="EAW76512.1"/>
    <property type="molecule type" value="Genomic_DNA"/>
</dbReference>
<dbReference type="EMBL" id="CH471091">
    <property type="protein sequence ID" value="EAW76513.1"/>
    <property type="molecule type" value="Genomic_DNA"/>
</dbReference>
<dbReference type="EMBL" id="BC005042">
    <property type="protein sequence ID" value="AAH05042.1"/>
    <property type="molecule type" value="mRNA"/>
</dbReference>
<dbReference type="EMBL" id="BC011653">
    <property type="protein sequence ID" value="AAH11653.1"/>
    <property type="molecule type" value="mRNA"/>
</dbReference>
<dbReference type="EMBL" id="BC028475">
    <property type="status" value="NOT_ANNOTATED_CDS"/>
    <property type="molecule type" value="mRNA"/>
</dbReference>
<dbReference type="CCDS" id="CCDS47662.1">
    <molecule id="O75425-4"/>
</dbReference>
<dbReference type="CCDS" id="CCDS5701.1">
    <molecule id="O75425-1"/>
</dbReference>
<dbReference type="RefSeq" id="NP_001035186.1">
    <molecule id="O75425-1"/>
    <property type="nucleotide sequence ID" value="NM_001040097.2"/>
</dbReference>
<dbReference type="RefSeq" id="NP_001035187.1">
    <molecule id="O75425-1"/>
    <property type="nucleotide sequence ID" value="NM_001040098.1"/>
</dbReference>
<dbReference type="RefSeq" id="NP_001035188.1">
    <molecule id="O75425-4"/>
    <property type="nucleotide sequence ID" value="NM_001040099.2"/>
</dbReference>
<dbReference type="RefSeq" id="NP_001350344.1">
    <molecule id="O75425-1"/>
    <property type="nucleotide sequence ID" value="NM_001363415.1"/>
</dbReference>
<dbReference type="RefSeq" id="NP_001350345.1">
    <molecule id="O75425-1"/>
    <property type="nucleotide sequence ID" value="NM_001363416.1"/>
</dbReference>
<dbReference type="RefSeq" id="NP_076438.1">
    <molecule id="O75425-1"/>
    <property type="nucleotide sequence ID" value="NM_023948.5"/>
</dbReference>
<dbReference type="RefSeq" id="XP_005250586.1">
    <property type="nucleotide sequence ID" value="XM_005250529.4"/>
</dbReference>
<dbReference type="RefSeq" id="XP_005250588.1">
    <property type="nucleotide sequence ID" value="XM_005250531.3"/>
</dbReference>
<dbReference type="RefSeq" id="XP_047276670.1">
    <molecule id="O75425-1"/>
    <property type="nucleotide sequence ID" value="XM_047420714.1"/>
</dbReference>
<dbReference type="RefSeq" id="XP_054214780.1">
    <molecule id="O75425-1"/>
    <property type="nucleotide sequence ID" value="XM_054358805.1"/>
</dbReference>
<dbReference type="SMR" id="O75425"/>
<dbReference type="BioGRID" id="122217">
    <property type="interactions" value="25"/>
</dbReference>
<dbReference type="FunCoup" id="O75425">
    <property type="interactions" value="339"/>
</dbReference>
<dbReference type="IntAct" id="O75425">
    <property type="interactions" value="21"/>
</dbReference>
<dbReference type="STRING" id="9606.ENSP00000377522"/>
<dbReference type="GlyGen" id="O75425">
    <property type="glycosylation" value="1 site"/>
</dbReference>
<dbReference type="iPTMnet" id="O75425"/>
<dbReference type="PhosphoSitePlus" id="O75425"/>
<dbReference type="BioMuta" id="MOSPD3"/>
<dbReference type="jPOST" id="O75425"/>
<dbReference type="MassIVE" id="O75425"/>
<dbReference type="PaxDb" id="9606-ENSP00000377522"/>
<dbReference type="PeptideAtlas" id="O75425"/>
<dbReference type="ProteomicsDB" id="49993">
    <molecule id="O75425-1"/>
</dbReference>
<dbReference type="ProteomicsDB" id="49994">
    <molecule id="O75425-2"/>
</dbReference>
<dbReference type="ProteomicsDB" id="49995">
    <molecule id="O75425-3"/>
</dbReference>
<dbReference type="ProteomicsDB" id="9827"/>
<dbReference type="Pumba" id="O75425"/>
<dbReference type="Antibodypedia" id="30772">
    <property type="antibodies" value="119 antibodies from 23 providers"/>
</dbReference>
<dbReference type="DNASU" id="64598"/>
<dbReference type="Ensembl" id="ENST00000223054.8">
    <molecule id="O75425-1"/>
    <property type="protein sequence ID" value="ENSP00000223054.4"/>
    <property type="gene ID" value="ENSG00000106330.12"/>
</dbReference>
<dbReference type="Ensembl" id="ENST00000379527.6">
    <molecule id="O75425-1"/>
    <property type="protein sequence ID" value="ENSP00000368842.2"/>
    <property type="gene ID" value="ENSG00000106330.12"/>
</dbReference>
<dbReference type="Ensembl" id="ENST00000393950.7">
    <molecule id="O75425-1"/>
    <property type="protein sequence ID" value="ENSP00000377522.2"/>
    <property type="gene ID" value="ENSG00000106330.12"/>
</dbReference>
<dbReference type="Ensembl" id="ENST00000424091.2">
    <molecule id="O75425-4"/>
    <property type="protein sequence ID" value="ENSP00000404626.2"/>
    <property type="gene ID" value="ENSG00000106330.12"/>
</dbReference>
<dbReference type="GeneID" id="64598"/>
<dbReference type="KEGG" id="hsa:64598"/>
<dbReference type="MANE-Select" id="ENST00000393950.7">
    <property type="protein sequence ID" value="ENSP00000377522.2"/>
    <property type="RefSeq nucleotide sequence ID" value="NM_023948.5"/>
    <property type="RefSeq protein sequence ID" value="NP_076438.1"/>
</dbReference>
<dbReference type="UCSC" id="uc003uvq.4">
    <molecule id="O75425-1"/>
    <property type="organism name" value="human"/>
</dbReference>
<dbReference type="AGR" id="HGNC:25078"/>
<dbReference type="CTD" id="64598"/>
<dbReference type="DisGeNET" id="64598"/>
<dbReference type="GeneCards" id="MOSPD3"/>
<dbReference type="HGNC" id="HGNC:25078">
    <property type="gene designation" value="MOSPD3"/>
</dbReference>
<dbReference type="HPA" id="ENSG00000106330">
    <property type="expression patterns" value="Low tissue specificity"/>
</dbReference>
<dbReference type="MIM" id="609125">
    <property type="type" value="gene"/>
</dbReference>
<dbReference type="neXtProt" id="NX_O75425"/>
<dbReference type="OpenTargets" id="ENSG00000106330"/>
<dbReference type="PharmGKB" id="PA134865874"/>
<dbReference type="VEuPathDB" id="HostDB:ENSG00000106330"/>
<dbReference type="eggNOG" id="KOG0439">
    <property type="taxonomic scope" value="Eukaryota"/>
</dbReference>
<dbReference type="GeneTree" id="ENSGT00940000162123"/>
<dbReference type="HOGENOM" id="CLU_088040_0_0_1"/>
<dbReference type="InParanoid" id="O75425"/>
<dbReference type="OMA" id="DCFRIEL"/>
<dbReference type="OrthoDB" id="10022288at2759"/>
<dbReference type="PAN-GO" id="O75425">
    <property type="GO annotations" value="5 GO annotations based on evolutionary models"/>
</dbReference>
<dbReference type="PhylomeDB" id="O75425"/>
<dbReference type="TreeFam" id="TF319778"/>
<dbReference type="PathwayCommons" id="O75425"/>
<dbReference type="SignaLink" id="O75425"/>
<dbReference type="BioGRID-ORCS" id="64598">
    <property type="hits" value="13 hits in 1151 CRISPR screens"/>
</dbReference>
<dbReference type="ChiTaRS" id="MOSPD3">
    <property type="organism name" value="human"/>
</dbReference>
<dbReference type="GenomeRNAi" id="64598"/>
<dbReference type="Pharos" id="O75425">
    <property type="development level" value="Tbio"/>
</dbReference>
<dbReference type="PRO" id="PR:O75425"/>
<dbReference type="Proteomes" id="UP000005640">
    <property type="component" value="Chromosome 7"/>
</dbReference>
<dbReference type="RNAct" id="O75425">
    <property type="molecule type" value="protein"/>
</dbReference>
<dbReference type="Bgee" id="ENSG00000106330">
    <property type="expression patterns" value="Expressed in right testis and 199 other cell types or tissues"/>
</dbReference>
<dbReference type="ExpressionAtlas" id="O75425">
    <property type="expression patterns" value="baseline and differential"/>
</dbReference>
<dbReference type="GO" id="GO:0005737">
    <property type="term" value="C:cytoplasm"/>
    <property type="evidence" value="ECO:0000318"/>
    <property type="project" value="GO_Central"/>
</dbReference>
<dbReference type="GO" id="GO:0016020">
    <property type="term" value="C:membrane"/>
    <property type="evidence" value="ECO:0007669"/>
    <property type="project" value="UniProtKB-SubCell"/>
</dbReference>
<dbReference type="GO" id="GO:0007507">
    <property type="term" value="P:heart development"/>
    <property type="evidence" value="ECO:0007669"/>
    <property type="project" value="Ensembl"/>
</dbReference>
<dbReference type="FunFam" id="2.60.40.10:FF:000676">
    <property type="entry name" value="motile sperm domain-containing protein 3"/>
    <property type="match status" value="1"/>
</dbReference>
<dbReference type="Gene3D" id="2.60.40.10">
    <property type="entry name" value="Immunoglobulins"/>
    <property type="match status" value="1"/>
</dbReference>
<dbReference type="InterPro" id="IPR013783">
    <property type="entry name" value="Ig-like_fold"/>
</dbReference>
<dbReference type="InterPro" id="IPR039283">
    <property type="entry name" value="MOSPD1/3"/>
</dbReference>
<dbReference type="InterPro" id="IPR000535">
    <property type="entry name" value="MSP_dom"/>
</dbReference>
<dbReference type="InterPro" id="IPR008962">
    <property type="entry name" value="PapD-like_sf"/>
</dbReference>
<dbReference type="PANTHER" id="PTHR34441">
    <property type="entry name" value="MOTILE SPERM DOMAIN-CONTAINING PROTEIN 1"/>
    <property type="match status" value="1"/>
</dbReference>
<dbReference type="PANTHER" id="PTHR34441:SF4">
    <property type="entry name" value="MOTILE SPERM DOMAIN-CONTAINING PROTEIN 3"/>
    <property type="match status" value="1"/>
</dbReference>
<dbReference type="Pfam" id="PF00635">
    <property type="entry name" value="Motile_Sperm"/>
    <property type="match status" value="1"/>
</dbReference>
<dbReference type="SUPFAM" id="SSF49354">
    <property type="entry name" value="PapD-like"/>
    <property type="match status" value="1"/>
</dbReference>
<dbReference type="PROSITE" id="PS50202">
    <property type="entry name" value="MSP"/>
    <property type="match status" value="1"/>
</dbReference>
<comment type="interaction">
    <interactant intactId="EBI-12179105">
        <id>O75425</id>
    </interactant>
    <interactant intactId="EBI-11343438">
        <id>Q3SXY8</id>
        <label>ARL13B</label>
    </interactant>
    <organismsDiffer>false</organismsDiffer>
    <experiments>3</experiments>
</comment>
<comment type="interaction">
    <interactant intactId="EBI-12179105">
        <id>O75425</id>
    </interactant>
    <interactant intactId="EBI-2606700">
        <id>P18859</id>
        <label>ATP5PF</label>
    </interactant>
    <organismsDiffer>false</organismsDiffer>
    <experiments>3</experiments>
</comment>
<comment type="interaction">
    <interactant intactId="EBI-12179105">
        <id>O75425</id>
    </interactant>
    <interactant intactId="EBI-7797864">
        <id>P11912</id>
        <label>CD79A</label>
    </interactant>
    <organismsDiffer>false</organismsDiffer>
    <experiments>3</experiments>
</comment>
<comment type="interaction">
    <interactant intactId="EBI-12179105">
        <id>O75425</id>
    </interactant>
    <interactant intactId="EBI-743099">
        <id>Q969F0</id>
        <label>FATE1</label>
    </interactant>
    <organismsDiffer>false</organismsDiffer>
    <experiments>3</experiments>
</comment>
<comment type="interaction">
    <interactant intactId="EBI-12179105">
        <id>O75425</id>
    </interactant>
    <interactant intactId="EBI-12142257">
        <id>Q8TBE3</id>
        <label>FNDC9</label>
    </interactant>
    <organismsDiffer>false</organismsDiffer>
    <experiments>3</experiments>
</comment>
<comment type="interaction">
    <interactant intactId="EBI-12179105">
        <id>O75425</id>
    </interactant>
    <interactant intactId="EBI-13345167">
        <id>Q8TDT2</id>
        <label>GPR152</label>
    </interactant>
    <organismsDiffer>false</organismsDiffer>
    <experiments>3</experiments>
</comment>
<comment type="interaction">
    <interactant intactId="EBI-12179105">
        <id>O75425</id>
    </interactant>
    <interactant intactId="EBI-18053395">
        <id>Q7Z5P4</id>
        <label>HSD17B13</label>
    </interactant>
    <organismsDiffer>false</organismsDiffer>
    <experiments>3</experiments>
</comment>
<comment type="interaction">
    <interactant intactId="EBI-12179105">
        <id>O75425</id>
    </interactant>
    <interactant intactId="EBI-725665">
        <id>Q9Y5U9</id>
        <label>IER3IP1</label>
    </interactant>
    <organismsDiffer>false</organismsDiffer>
    <experiments>3</experiments>
</comment>
<comment type="interaction">
    <interactant intactId="EBI-12179105">
        <id>O75425</id>
    </interactant>
    <interactant intactId="EBI-749265">
        <id>Q8N6L0</id>
        <label>KASH5</label>
    </interactant>
    <organismsDiffer>false</organismsDiffer>
    <experiments>3</experiments>
</comment>
<comment type="interaction">
    <interactant intactId="EBI-12179105">
        <id>O75425</id>
    </interactant>
    <interactant intactId="EBI-11956541">
        <id>Q9GZY8-5</id>
        <label>MFF</label>
    </interactant>
    <organismsDiffer>false</organismsDiffer>
    <experiments>3</experiments>
</comment>
<comment type="interaction">
    <interactant intactId="EBI-12179105">
        <id>O75425</id>
    </interactant>
    <interactant intactId="EBI-18391669">
        <id>Q7Z6M3</id>
        <label>MILR1</label>
    </interactant>
    <organismsDiffer>false</organismsDiffer>
    <experiments>3</experiments>
</comment>
<comment type="interaction">
    <interactant intactId="EBI-12179105">
        <id>O75425</id>
    </interactant>
    <interactant intactId="EBI-7545592">
        <id>Q9H6H4</id>
        <label>REEP4</label>
    </interactant>
    <organismsDiffer>false</organismsDiffer>
    <experiments>3</experiments>
</comment>
<comment type="interaction">
    <interactant intactId="EBI-12179105">
        <id>O75425</id>
    </interactant>
    <interactant intactId="EBI-10192441">
        <id>Q86VR2</id>
        <label>RETREG3</label>
    </interactant>
    <organismsDiffer>false</organismsDiffer>
    <experiments>3</experiments>
</comment>
<comment type="interaction">
    <interactant intactId="EBI-12179105">
        <id>O75425</id>
    </interactant>
    <interactant intactId="EBI-12072024">
        <id>Q5EBL4-3</id>
        <label>RILPL1</label>
    </interactant>
    <organismsDiffer>false</organismsDiffer>
    <experiments>3</experiments>
</comment>
<comment type="interaction">
    <interactant intactId="EBI-12179105">
        <id>O75425</id>
    </interactant>
    <interactant intactId="EBI-3920694">
        <id>Q9NR31</id>
        <label>SAR1A</label>
    </interactant>
    <organismsDiffer>false</organismsDiffer>
    <experiments>3</experiments>
</comment>
<comment type="interaction">
    <interactant intactId="EBI-12179105">
        <id>O75425</id>
    </interactant>
    <interactant intactId="EBI-12345267">
        <id>O15393-2</id>
        <label>TMPRSS2</label>
    </interactant>
    <organismsDiffer>false</organismsDiffer>
    <experiments>3</experiments>
</comment>
<comment type="subcellular location">
    <subcellularLocation>
        <location evidence="5">Membrane</location>
        <topology evidence="5">Multi-pass membrane protein</topology>
    </subcellularLocation>
</comment>
<comment type="alternative products">
    <event type="alternative splicing"/>
    <isoform>
        <id>O75425-1</id>
        <name>1</name>
        <sequence type="displayed"/>
    </isoform>
    <isoform>
        <id>O75425-2</id>
        <name>2</name>
        <sequence type="described" ref="VSP_014053"/>
    </isoform>
    <isoform>
        <id>O75425-3</id>
        <name>3</name>
        <sequence type="described" ref="VSP_014054 VSP_014055"/>
    </isoform>
    <isoform>
        <id>O75425-4</id>
        <name>4</name>
        <sequence type="described" ref="VSP_044522"/>
    </isoform>
</comment>
<keyword id="KW-0025">Alternative splicing</keyword>
<keyword id="KW-0472">Membrane</keyword>
<keyword id="KW-1267">Proteomics identification</keyword>
<keyword id="KW-1185">Reference proteome</keyword>
<keyword id="KW-0812">Transmembrane</keyword>
<keyword id="KW-1133">Transmembrane helix</keyword>
<proteinExistence type="evidence at protein level"/>
<evidence type="ECO:0000255" key="1"/>
<evidence type="ECO:0000255" key="2">
    <source>
        <dbReference type="PROSITE-ProRule" id="PRU00132"/>
    </source>
</evidence>
<evidence type="ECO:0000256" key="3">
    <source>
        <dbReference type="SAM" id="MobiDB-lite"/>
    </source>
</evidence>
<evidence type="ECO:0000303" key="4">
    <source>
    </source>
</evidence>
<evidence type="ECO:0000305" key="5"/>
<feature type="chain" id="PRO_0000213465" description="Motile sperm domain-containing protein 3">
    <location>
        <begin position="1"/>
        <end position="235"/>
    </location>
</feature>
<feature type="transmembrane region" description="Helical" evidence="1">
    <location>
        <begin position="180"/>
        <end position="200"/>
    </location>
</feature>
<feature type="transmembrane region" description="Helical" evidence="1">
    <location>
        <begin position="213"/>
        <end position="233"/>
    </location>
</feature>
<feature type="domain" description="MSP" evidence="2">
    <location>
        <begin position="33"/>
        <end position="145"/>
    </location>
</feature>
<feature type="region of interest" description="Disordered" evidence="3">
    <location>
        <begin position="1"/>
        <end position="25"/>
    </location>
</feature>
<feature type="region of interest" description="Disordered" evidence="3">
    <location>
        <begin position="143"/>
        <end position="171"/>
    </location>
</feature>
<feature type="compositionally biased region" description="Pro residues" evidence="3">
    <location>
        <begin position="149"/>
        <end position="164"/>
    </location>
</feature>
<feature type="splice variant" id="VSP_014054" description="In isoform 3." evidence="5">
    <location>
        <begin position="1"/>
        <end position="53"/>
    </location>
</feature>
<feature type="splice variant" id="VSP_014053" description="In isoform 2." evidence="5">
    <original>MRRGAPQDQELVGPGPPGRGSRG</original>
    <variation>MSDRPEPAC</variation>
    <location>
        <begin position="1"/>
        <end position="23"/>
    </location>
</feature>
<feature type="splice variant" id="VSP_014055" description="In isoform 3." evidence="5">
    <original>LLTLYNPTGTALRFR</original>
    <variation>MTHMAGLVCVCLYPP</variation>
    <location>
        <begin position="54"/>
        <end position="68"/>
    </location>
</feature>
<feature type="splice variant" id="VSP_044522" description="In isoform 4." evidence="4">
    <location>
        <begin position="95"/>
        <end position="104"/>
    </location>
</feature>
<organism>
    <name type="scientific">Homo sapiens</name>
    <name type="common">Human</name>
    <dbReference type="NCBI Taxonomy" id="9606"/>
    <lineage>
        <taxon>Eukaryota</taxon>
        <taxon>Metazoa</taxon>
        <taxon>Chordata</taxon>
        <taxon>Craniata</taxon>
        <taxon>Vertebrata</taxon>
        <taxon>Euteleostomi</taxon>
        <taxon>Mammalia</taxon>
        <taxon>Eutheria</taxon>
        <taxon>Euarchontoglires</taxon>
        <taxon>Primates</taxon>
        <taxon>Haplorrhini</taxon>
        <taxon>Catarrhini</taxon>
        <taxon>Hominidae</taxon>
        <taxon>Homo</taxon>
    </lineage>
</organism>
<protein>
    <recommendedName>
        <fullName>Motile sperm domain-containing protein 3</fullName>
    </recommendedName>
</protein>
<gene>
    <name type="primary">MOSPD3</name>
</gene>